<sequence length="166" mass="18423">MISYKNILIAVDGSHEAEWAFNKAVGVAKRNDAQLTIVNVIDSRTYSSYEVYDAQFTEKSKHFSEELLKGYKEVATNAGVKNVDTRLEFGSPKAIIPKKLARDVGADLIMSGTSGLNAVERFIVGSVSEAIVRHAPCDVLVVRTEEMPEDFQPQVATPQLREKYQD</sequence>
<evidence type="ECO:0000250" key="1"/>
<evidence type="ECO:0000305" key="2"/>
<organism>
    <name type="scientific">Staphylococcus epidermidis (strain ATCC 12228 / FDA PCI 1200)</name>
    <dbReference type="NCBI Taxonomy" id="176280"/>
    <lineage>
        <taxon>Bacteria</taxon>
        <taxon>Bacillati</taxon>
        <taxon>Bacillota</taxon>
        <taxon>Bacilli</taxon>
        <taxon>Bacillales</taxon>
        <taxon>Staphylococcaceae</taxon>
        <taxon>Staphylococcus</taxon>
    </lineage>
</organism>
<reference key="1">
    <citation type="journal article" date="2003" name="Mol. Microbiol.">
        <title>Genome-based analysis of virulence genes in a non-biofilm-forming Staphylococcus epidermidis strain (ATCC 12228).</title>
        <authorList>
            <person name="Zhang Y.-Q."/>
            <person name="Ren S.-X."/>
            <person name="Li H.-L."/>
            <person name="Wang Y.-X."/>
            <person name="Fu G."/>
            <person name="Yang J."/>
            <person name="Qin Z.-Q."/>
            <person name="Miao Y.-G."/>
            <person name="Wang W.-Y."/>
            <person name="Chen R.-S."/>
            <person name="Shen Y."/>
            <person name="Chen Z."/>
            <person name="Yuan Z.-H."/>
            <person name="Zhao G.-P."/>
            <person name="Qu D."/>
            <person name="Danchin A."/>
            <person name="Wen Y.-M."/>
        </authorList>
    </citation>
    <scope>NUCLEOTIDE SEQUENCE [LARGE SCALE GENOMIC DNA]</scope>
    <source>
        <strain>ATCC 12228 / FDA PCI 1200</strain>
    </source>
</reference>
<feature type="chain" id="PRO_0000288898" description="Putative universal stress protein SE_1385">
    <location>
        <begin position="1"/>
        <end position="166"/>
    </location>
</feature>
<protein>
    <recommendedName>
        <fullName>Putative universal stress protein SE_1385</fullName>
    </recommendedName>
</protein>
<comment type="subcellular location">
    <subcellularLocation>
        <location evidence="1">Cytoplasm</location>
    </subcellularLocation>
</comment>
<comment type="similarity">
    <text evidence="2">Belongs to the universal stress protein A family.</text>
</comment>
<accession>Q8CS61</accession>
<keyword id="KW-0963">Cytoplasm</keyword>
<name>Y1385_STAES</name>
<gene>
    <name type="ordered locus">SE_1385</name>
</gene>
<proteinExistence type="inferred from homology"/>
<dbReference type="EMBL" id="AE015929">
    <property type="protein sequence ID" value="AAO04984.1"/>
    <property type="molecule type" value="Genomic_DNA"/>
</dbReference>
<dbReference type="RefSeq" id="NP_764940.1">
    <property type="nucleotide sequence ID" value="NC_004461.1"/>
</dbReference>
<dbReference type="RefSeq" id="WP_002494483.1">
    <property type="nucleotide sequence ID" value="NZ_WBME01000042.1"/>
</dbReference>
<dbReference type="SMR" id="Q8CS61"/>
<dbReference type="KEGG" id="sep:SE_1385"/>
<dbReference type="PATRIC" id="fig|176280.10.peg.1353"/>
<dbReference type="eggNOG" id="COG0589">
    <property type="taxonomic scope" value="Bacteria"/>
</dbReference>
<dbReference type="HOGENOM" id="CLU_049301_16_0_9"/>
<dbReference type="OrthoDB" id="9789668at2"/>
<dbReference type="Proteomes" id="UP000001411">
    <property type="component" value="Chromosome"/>
</dbReference>
<dbReference type="GO" id="GO:0005737">
    <property type="term" value="C:cytoplasm"/>
    <property type="evidence" value="ECO:0007669"/>
    <property type="project" value="UniProtKB-SubCell"/>
</dbReference>
<dbReference type="CDD" id="cd00293">
    <property type="entry name" value="USP-like"/>
    <property type="match status" value="1"/>
</dbReference>
<dbReference type="Gene3D" id="3.40.50.620">
    <property type="entry name" value="HUPs"/>
    <property type="match status" value="1"/>
</dbReference>
<dbReference type="InterPro" id="IPR014729">
    <property type="entry name" value="Rossmann-like_a/b/a_fold"/>
</dbReference>
<dbReference type="InterPro" id="IPR006015">
    <property type="entry name" value="Universal_stress_UspA"/>
</dbReference>
<dbReference type="InterPro" id="IPR006016">
    <property type="entry name" value="UspA"/>
</dbReference>
<dbReference type="PANTHER" id="PTHR46268">
    <property type="entry name" value="STRESS RESPONSE PROTEIN NHAX"/>
    <property type="match status" value="1"/>
</dbReference>
<dbReference type="PANTHER" id="PTHR46268:SF6">
    <property type="entry name" value="UNIVERSAL STRESS PROTEIN UP12"/>
    <property type="match status" value="1"/>
</dbReference>
<dbReference type="Pfam" id="PF00582">
    <property type="entry name" value="Usp"/>
    <property type="match status" value="1"/>
</dbReference>
<dbReference type="PIRSF" id="PIRSF006276">
    <property type="entry name" value="UspA"/>
    <property type="match status" value="1"/>
</dbReference>
<dbReference type="PRINTS" id="PR01438">
    <property type="entry name" value="UNVRSLSTRESS"/>
</dbReference>
<dbReference type="SUPFAM" id="SSF52402">
    <property type="entry name" value="Adenine nucleotide alpha hydrolases-like"/>
    <property type="match status" value="1"/>
</dbReference>